<gene>
    <name evidence="1" type="primary">csrA</name>
    <name type="ordered locus">CLM_3103</name>
</gene>
<sequence>MLVITRKKGESLLIGDDIEITVVKLDDGSVKLAIDAPKNLTILRKELYNEVQEENKKATNFNPSILKNIKSK</sequence>
<protein>
    <recommendedName>
        <fullName evidence="1">Translational regulator CsrA</fullName>
    </recommendedName>
</protein>
<accession>C1FUD5</accession>
<reference key="1">
    <citation type="submission" date="2008-10" db="EMBL/GenBank/DDBJ databases">
        <title>Genome sequence of Clostridium botulinum A2 Kyoto.</title>
        <authorList>
            <person name="Shrivastava S."/>
            <person name="Brinkac L.M."/>
            <person name="Brown J.L."/>
            <person name="Bruce D."/>
            <person name="Detter C.C."/>
            <person name="Johnson E.A."/>
            <person name="Munk C.A."/>
            <person name="Smith L.A."/>
            <person name="Smith T.J."/>
            <person name="Sutton G."/>
            <person name="Brettin T.S."/>
        </authorList>
    </citation>
    <scope>NUCLEOTIDE SEQUENCE [LARGE SCALE GENOMIC DNA]</scope>
    <source>
        <strain>Kyoto / Type A2</strain>
    </source>
</reference>
<keyword id="KW-1005">Bacterial flagellum biogenesis</keyword>
<keyword id="KW-0963">Cytoplasm</keyword>
<keyword id="KW-0678">Repressor</keyword>
<keyword id="KW-0694">RNA-binding</keyword>
<keyword id="KW-0810">Translation regulation</keyword>
<feature type="chain" id="PRO_1000123620" description="Translational regulator CsrA">
    <location>
        <begin position="1"/>
        <end position="72"/>
    </location>
</feature>
<organism>
    <name type="scientific">Clostridium botulinum (strain Kyoto / Type A2)</name>
    <dbReference type="NCBI Taxonomy" id="536232"/>
    <lineage>
        <taxon>Bacteria</taxon>
        <taxon>Bacillati</taxon>
        <taxon>Bacillota</taxon>
        <taxon>Clostridia</taxon>
        <taxon>Eubacteriales</taxon>
        <taxon>Clostridiaceae</taxon>
        <taxon>Clostridium</taxon>
    </lineage>
</organism>
<dbReference type="EMBL" id="CP001581">
    <property type="protein sequence ID" value="ACO85744.1"/>
    <property type="molecule type" value="Genomic_DNA"/>
</dbReference>
<dbReference type="RefSeq" id="WP_011987028.1">
    <property type="nucleotide sequence ID" value="NC_012563.1"/>
</dbReference>
<dbReference type="SMR" id="C1FUD5"/>
<dbReference type="GeneID" id="5184305"/>
<dbReference type="KEGG" id="cby:CLM_3103"/>
<dbReference type="eggNOG" id="COG1551">
    <property type="taxonomic scope" value="Bacteria"/>
</dbReference>
<dbReference type="HOGENOM" id="CLU_164837_0_1_9"/>
<dbReference type="Proteomes" id="UP000001374">
    <property type="component" value="Chromosome"/>
</dbReference>
<dbReference type="GO" id="GO:0005829">
    <property type="term" value="C:cytosol"/>
    <property type="evidence" value="ECO:0007669"/>
    <property type="project" value="TreeGrafter"/>
</dbReference>
<dbReference type="GO" id="GO:0048027">
    <property type="term" value="F:mRNA 5'-UTR binding"/>
    <property type="evidence" value="ECO:0007669"/>
    <property type="project" value="UniProtKB-UniRule"/>
</dbReference>
<dbReference type="GO" id="GO:0044781">
    <property type="term" value="P:bacterial-type flagellum organization"/>
    <property type="evidence" value="ECO:0007669"/>
    <property type="project" value="UniProtKB-KW"/>
</dbReference>
<dbReference type="GO" id="GO:0006402">
    <property type="term" value="P:mRNA catabolic process"/>
    <property type="evidence" value="ECO:0007669"/>
    <property type="project" value="InterPro"/>
</dbReference>
<dbReference type="GO" id="GO:0045947">
    <property type="term" value="P:negative regulation of translational initiation"/>
    <property type="evidence" value="ECO:0007669"/>
    <property type="project" value="UniProtKB-UniRule"/>
</dbReference>
<dbReference type="GO" id="GO:1902208">
    <property type="term" value="P:regulation of bacterial-type flagellum assembly"/>
    <property type="evidence" value="ECO:0007669"/>
    <property type="project" value="UniProtKB-UniRule"/>
</dbReference>
<dbReference type="GO" id="GO:0006109">
    <property type="term" value="P:regulation of carbohydrate metabolic process"/>
    <property type="evidence" value="ECO:0007669"/>
    <property type="project" value="InterPro"/>
</dbReference>
<dbReference type="FunFam" id="2.60.40.4380:FF:000002">
    <property type="entry name" value="Translational regulator CsrA"/>
    <property type="match status" value="1"/>
</dbReference>
<dbReference type="Gene3D" id="2.60.40.4380">
    <property type="entry name" value="Translational regulator CsrA"/>
    <property type="match status" value="1"/>
</dbReference>
<dbReference type="HAMAP" id="MF_00167">
    <property type="entry name" value="CsrA"/>
    <property type="match status" value="1"/>
</dbReference>
<dbReference type="InterPro" id="IPR003751">
    <property type="entry name" value="CsrA"/>
</dbReference>
<dbReference type="InterPro" id="IPR036107">
    <property type="entry name" value="CsrA_sf"/>
</dbReference>
<dbReference type="NCBIfam" id="TIGR00202">
    <property type="entry name" value="csrA"/>
    <property type="match status" value="1"/>
</dbReference>
<dbReference type="NCBIfam" id="NF002469">
    <property type="entry name" value="PRK01712.1"/>
    <property type="match status" value="1"/>
</dbReference>
<dbReference type="PANTHER" id="PTHR34984">
    <property type="entry name" value="CARBON STORAGE REGULATOR"/>
    <property type="match status" value="1"/>
</dbReference>
<dbReference type="PANTHER" id="PTHR34984:SF1">
    <property type="entry name" value="CARBON STORAGE REGULATOR"/>
    <property type="match status" value="1"/>
</dbReference>
<dbReference type="Pfam" id="PF02599">
    <property type="entry name" value="CsrA"/>
    <property type="match status" value="1"/>
</dbReference>
<dbReference type="SUPFAM" id="SSF117130">
    <property type="entry name" value="CsrA-like"/>
    <property type="match status" value="1"/>
</dbReference>
<evidence type="ECO:0000255" key="1">
    <source>
        <dbReference type="HAMAP-Rule" id="MF_00167"/>
    </source>
</evidence>
<proteinExistence type="inferred from homology"/>
<name>CSRA_CLOBJ</name>
<comment type="function">
    <text evidence="1">A translational regulator that binds mRNA to regulate translation initiation and/or mRNA stability. Usually binds in the 5'-UTR at or near the Shine-Dalgarno sequence preventing ribosome-binding, thus repressing translation. Its main target seems to be the major flagellin gene, while its function is anatagonized by FliW.</text>
</comment>
<comment type="subunit">
    <text evidence="1">Homodimer; the beta-strands of each monomer intercalate to form a hydrophobic core, while the alpha-helices form wings that extend away from the core.</text>
</comment>
<comment type="subcellular location">
    <subcellularLocation>
        <location evidence="1">Cytoplasm</location>
    </subcellularLocation>
</comment>
<comment type="similarity">
    <text evidence="1">Belongs to the CsrA/RsmA family.</text>
</comment>